<dbReference type="EC" id="1.14.19.20"/>
<dbReference type="EMBL" id="AC021640">
    <property type="protein sequence ID" value="AAF32466.1"/>
    <property type="molecule type" value="Genomic_DNA"/>
</dbReference>
<dbReference type="EMBL" id="CP002686">
    <property type="protein sequence ID" value="AEE73833.1"/>
    <property type="molecule type" value="Genomic_DNA"/>
</dbReference>
<dbReference type="RefSeq" id="NP_186908.1">
    <property type="nucleotide sequence ID" value="NM_111127.2"/>
</dbReference>
<dbReference type="FunCoup" id="Q9M883">
    <property type="interactions" value="697"/>
</dbReference>
<dbReference type="STRING" id="3702.Q9M883"/>
<dbReference type="PaxDb" id="3702-AT3G02590.1"/>
<dbReference type="EnsemblPlants" id="AT3G02590.1">
    <property type="protein sequence ID" value="AT3G02590.1"/>
    <property type="gene ID" value="AT3G02590"/>
</dbReference>
<dbReference type="GeneID" id="820687"/>
<dbReference type="Gramene" id="AT3G02590.1">
    <property type="protein sequence ID" value="AT3G02590.1"/>
    <property type="gene ID" value="AT3G02590"/>
</dbReference>
<dbReference type="KEGG" id="ath:AT3G02590"/>
<dbReference type="Araport" id="AT3G02590"/>
<dbReference type="TAIR" id="AT3G02590"/>
<dbReference type="eggNOG" id="KOG0872">
    <property type="taxonomic scope" value="Eukaryota"/>
</dbReference>
<dbReference type="HOGENOM" id="CLU_047036_2_1_1"/>
<dbReference type="InParanoid" id="Q9M883"/>
<dbReference type="OMA" id="CINGNIW"/>
<dbReference type="OrthoDB" id="408954at2759"/>
<dbReference type="PhylomeDB" id="Q9M883"/>
<dbReference type="BioCyc" id="ARA:AT3G02590-MONOMER"/>
<dbReference type="PRO" id="PR:Q9M883"/>
<dbReference type="Proteomes" id="UP000006548">
    <property type="component" value="Chromosome 3"/>
</dbReference>
<dbReference type="ExpressionAtlas" id="Q9M883">
    <property type="expression patterns" value="baseline and differential"/>
</dbReference>
<dbReference type="GO" id="GO:0005789">
    <property type="term" value="C:endoplasmic reticulum membrane"/>
    <property type="evidence" value="ECO:0007669"/>
    <property type="project" value="UniProtKB-SubCell"/>
</dbReference>
<dbReference type="GO" id="GO:0050046">
    <property type="term" value="F:delta7-sterol 5(6)-desaturase activity"/>
    <property type="evidence" value="ECO:0007669"/>
    <property type="project" value="UniProtKB-EC"/>
</dbReference>
<dbReference type="GO" id="GO:0005506">
    <property type="term" value="F:iron ion binding"/>
    <property type="evidence" value="ECO:0007669"/>
    <property type="project" value="InterPro"/>
</dbReference>
<dbReference type="GO" id="GO:0016126">
    <property type="term" value="P:sterol biosynthetic process"/>
    <property type="evidence" value="ECO:0007669"/>
    <property type="project" value="UniProtKB-KW"/>
</dbReference>
<dbReference type="InterPro" id="IPR006694">
    <property type="entry name" value="Fatty_acid_hydroxylase"/>
</dbReference>
<dbReference type="InterPro" id="IPR050307">
    <property type="entry name" value="Sterol_Desaturase_Related"/>
</dbReference>
<dbReference type="PANTHER" id="PTHR11863">
    <property type="entry name" value="STEROL DESATURASE"/>
    <property type="match status" value="1"/>
</dbReference>
<dbReference type="Pfam" id="PF04116">
    <property type="entry name" value="FA_hydroxylase"/>
    <property type="match status" value="1"/>
</dbReference>
<gene>
    <name type="primary">HDF7</name>
    <name type="ordered locus">At3g02590</name>
    <name type="ORF">F16B3.22</name>
</gene>
<comment type="catalytic activity">
    <reaction evidence="2">
        <text>a Delta(7)-sterol + 2 Fe(II)-[cytochrome b5] + O2 + 2 H(+) = a Delta(5),Delta(7)-sterol + 2 Fe(III)-[cytochrome b5] + 2 H2O</text>
        <dbReference type="Rhea" id="RHEA:54320"/>
        <dbReference type="Rhea" id="RHEA-COMP:10438"/>
        <dbReference type="Rhea" id="RHEA-COMP:10439"/>
        <dbReference type="ChEBI" id="CHEBI:15377"/>
        <dbReference type="ChEBI" id="CHEBI:15378"/>
        <dbReference type="ChEBI" id="CHEBI:15379"/>
        <dbReference type="ChEBI" id="CHEBI:29033"/>
        <dbReference type="ChEBI" id="CHEBI:29034"/>
        <dbReference type="ChEBI" id="CHEBI:138130"/>
        <dbReference type="ChEBI" id="CHEBI:138131"/>
        <dbReference type="EC" id="1.14.19.20"/>
    </reaction>
</comment>
<comment type="cofactor">
    <cofactor evidence="1">
        <name>Fe cation</name>
        <dbReference type="ChEBI" id="CHEBI:24875"/>
    </cofactor>
</comment>
<comment type="subcellular location">
    <subcellularLocation>
        <location evidence="4">Endoplasmic reticulum membrane</location>
        <topology evidence="4">Multi-pass membrane protein</topology>
    </subcellularLocation>
</comment>
<comment type="domain">
    <text>The histidine box domains may contain the active site and/or be involved in metal ion binding.</text>
</comment>
<comment type="similarity">
    <text evidence="4">Belongs to the sterol desaturase family.</text>
</comment>
<feature type="chain" id="PRO_0000117031" description="Putative Delta(7)-sterol-C5(6)-desaturase 2">
    <location>
        <begin position="1"/>
        <end position="279"/>
    </location>
</feature>
<feature type="transmembrane region" description="Helical" evidence="3">
    <location>
        <begin position="48"/>
        <end position="68"/>
    </location>
</feature>
<feature type="transmembrane region" description="Helical" evidence="3">
    <location>
        <begin position="127"/>
        <end position="147"/>
    </location>
</feature>
<feature type="transmembrane region" description="Helical" evidence="3">
    <location>
        <begin position="194"/>
        <end position="214"/>
    </location>
</feature>
<feature type="domain" description="Fatty acid hydroxylase" evidence="3">
    <location>
        <begin position="134"/>
        <end position="263"/>
    </location>
</feature>
<feature type="short sequence motif" description="Histidine box-1">
    <location>
        <begin position="148"/>
        <end position="152"/>
    </location>
</feature>
<feature type="short sequence motif" description="Histidine box-2">
    <location>
        <begin position="162"/>
        <end position="166"/>
    </location>
</feature>
<feature type="short sequence motif" description="Histidine box-3">
    <location>
        <begin position="239"/>
        <end position="243"/>
    </location>
</feature>
<proteinExistence type="inferred from homology"/>
<reference key="1">
    <citation type="journal article" date="2000" name="Nature">
        <title>Sequence and analysis of chromosome 3 of the plant Arabidopsis thaliana.</title>
        <authorList>
            <person name="Salanoubat M."/>
            <person name="Lemcke K."/>
            <person name="Rieger M."/>
            <person name="Ansorge W."/>
            <person name="Unseld M."/>
            <person name="Fartmann B."/>
            <person name="Valle G."/>
            <person name="Bloecker H."/>
            <person name="Perez-Alonso M."/>
            <person name="Obermaier B."/>
            <person name="Delseny M."/>
            <person name="Boutry M."/>
            <person name="Grivell L.A."/>
            <person name="Mache R."/>
            <person name="Puigdomenech P."/>
            <person name="De Simone V."/>
            <person name="Choisne N."/>
            <person name="Artiguenave F."/>
            <person name="Robert C."/>
            <person name="Brottier P."/>
            <person name="Wincker P."/>
            <person name="Cattolico L."/>
            <person name="Weissenbach J."/>
            <person name="Saurin W."/>
            <person name="Quetier F."/>
            <person name="Schaefer M."/>
            <person name="Mueller-Auer S."/>
            <person name="Gabel C."/>
            <person name="Fuchs M."/>
            <person name="Benes V."/>
            <person name="Wurmbach E."/>
            <person name="Drzonek H."/>
            <person name="Erfle H."/>
            <person name="Jordan N."/>
            <person name="Bangert S."/>
            <person name="Wiedelmann R."/>
            <person name="Kranz H."/>
            <person name="Voss H."/>
            <person name="Holland R."/>
            <person name="Brandt P."/>
            <person name="Nyakatura G."/>
            <person name="Vezzi A."/>
            <person name="D'Angelo M."/>
            <person name="Pallavicini A."/>
            <person name="Toppo S."/>
            <person name="Simionati B."/>
            <person name="Conrad A."/>
            <person name="Hornischer K."/>
            <person name="Kauer G."/>
            <person name="Loehnert T.-H."/>
            <person name="Nordsiek G."/>
            <person name="Reichelt J."/>
            <person name="Scharfe M."/>
            <person name="Schoen O."/>
            <person name="Bargues M."/>
            <person name="Terol J."/>
            <person name="Climent J."/>
            <person name="Navarro P."/>
            <person name="Collado C."/>
            <person name="Perez-Perez A."/>
            <person name="Ottenwaelder B."/>
            <person name="Duchemin D."/>
            <person name="Cooke R."/>
            <person name="Laudie M."/>
            <person name="Berger-Llauro C."/>
            <person name="Purnelle B."/>
            <person name="Masuy D."/>
            <person name="de Haan M."/>
            <person name="Maarse A.C."/>
            <person name="Alcaraz J.-P."/>
            <person name="Cottet A."/>
            <person name="Casacuberta E."/>
            <person name="Monfort A."/>
            <person name="Argiriou A."/>
            <person name="Flores M."/>
            <person name="Liguori R."/>
            <person name="Vitale D."/>
            <person name="Mannhaupt G."/>
            <person name="Haase D."/>
            <person name="Schoof H."/>
            <person name="Rudd S."/>
            <person name="Zaccaria P."/>
            <person name="Mewes H.-W."/>
            <person name="Mayer K.F.X."/>
            <person name="Kaul S."/>
            <person name="Town C.D."/>
            <person name="Koo H.L."/>
            <person name="Tallon L.J."/>
            <person name="Jenkins J."/>
            <person name="Rooney T."/>
            <person name="Rizzo M."/>
            <person name="Walts A."/>
            <person name="Utterback T."/>
            <person name="Fujii C.Y."/>
            <person name="Shea T.P."/>
            <person name="Creasy T.H."/>
            <person name="Haas B."/>
            <person name="Maiti R."/>
            <person name="Wu D."/>
            <person name="Peterson J."/>
            <person name="Van Aken S."/>
            <person name="Pai G."/>
            <person name="Militscher J."/>
            <person name="Sellers P."/>
            <person name="Gill J.E."/>
            <person name="Feldblyum T.V."/>
            <person name="Preuss D."/>
            <person name="Lin X."/>
            <person name="Nierman W.C."/>
            <person name="Salzberg S.L."/>
            <person name="White O."/>
            <person name="Venter J.C."/>
            <person name="Fraser C.M."/>
            <person name="Kaneko T."/>
            <person name="Nakamura Y."/>
            <person name="Sato S."/>
            <person name="Kato T."/>
            <person name="Asamizu E."/>
            <person name="Sasamoto S."/>
            <person name="Kimura T."/>
            <person name="Idesawa K."/>
            <person name="Kawashima K."/>
            <person name="Kishida Y."/>
            <person name="Kiyokawa C."/>
            <person name="Kohara M."/>
            <person name="Matsumoto M."/>
            <person name="Matsuno A."/>
            <person name="Muraki A."/>
            <person name="Nakayama S."/>
            <person name="Nakazaki N."/>
            <person name="Shinpo S."/>
            <person name="Takeuchi C."/>
            <person name="Wada T."/>
            <person name="Watanabe A."/>
            <person name="Yamada M."/>
            <person name="Yasuda M."/>
            <person name="Tabata S."/>
        </authorList>
    </citation>
    <scope>NUCLEOTIDE SEQUENCE [LARGE SCALE GENOMIC DNA]</scope>
    <source>
        <strain>cv. Columbia</strain>
    </source>
</reference>
<reference key="2">
    <citation type="journal article" date="2017" name="Plant J.">
        <title>Araport11: a complete reannotation of the Arabidopsis thaliana reference genome.</title>
        <authorList>
            <person name="Cheng C.Y."/>
            <person name="Krishnakumar V."/>
            <person name="Chan A.P."/>
            <person name="Thibaud-Nissen F."/>
            <person name="Schobel S."/>
            <person name="Town C.D."/>
        </authorList>
    </citation>
    <scope>GENOME REANNOTATION</scope>
    <source>
        <strain>cv. Columbia</strain>
    </source>
</reference>
<keyword id="KW-0256">Endoplasmic reticulum</keyword>
<keyword id="KW-0408">Iron</keyword>
<keyword id="KW-0444">Lipid biosynthesis</keyword>
<keyword id="KW-0443">Lipid metabolism</keyword>
<keyword id="KW-0472">Membrane</keyword>
<keyword id="KW-0560">Oxidoreductase</keyword>
<keyword id="KW-1185">Reference proteome</keyword>
<keyword id="KW-0752">Steroid biosynthesis</keyword>
<keyword id="KW-0753">Steroid metabolism</keyword>
<keyword id="KW-0756">Sterol biosynthesis</keyword>
<keyword id="KW-1207">Sterol metabolism</keyword>
<keyword id="KW-0812">Transmembrane</keyword>
<keyword id="KW-1133">Transmembrane helix</keyword>
<sequence length="279" mass="33111">MAATMADYNDQIVNETSFYNRMVLSHLLPVNLWEPLPHFLQTWLRNYLAGNILYFISGFLWCFYIYYLKLNVYVPKESIPTRKAMLLQIYVAMKAMPWYTLLPAVSEYMIEHGWTKCYSTLDHFNWFLCFLYIALYLVLVEFMIYWVHKELHDIKFLYKHLHATHHMYNKQNTLSPFAGLAFHPLDGILQAIPHVIALFIVPIHLITHLSLLFLEGIWTASIHDCIHGNIWPIMGAGYHTIHHTTYKHNYGHYTIWMDWMFGSLMVPLAEKDSFKEKEK</sequence>
<name>SC5D2_ARATH</name>
<accession>Q9M883</accession>
<organism>
    <name type="scientific">Arabidopsis thaliana</name>
    <name type="common">Mouse-ear cress</name>
    <dbReference type="NCBI Taxonomy" id="3702"/>
    <lineage>
        <taxon>Eukaryota</taxon>
        <taxon>Viridiplantae</taxon>
        <taxon>Streptophyta</taxon>
        <taxon>Embryophyta</taxon>
        <taxon>Tracheophyta</taxon>
        <taxon>Spermatophyta</taxon>
        <taxon>Magnoliopsida</taxon>
        <taxon>eudicotyledons</taxon>
        <taxon>Gunneridae</taxon>
        <taxon>Pentapetalae</taxon>
        <taxon>rosids</taxon>
        <taxon>malvids</taxon>
        <taxon>Brassicales</taxon>
        <taxon>Brassicaceae</taxon>
        <taxon>Camelineae</taxon>
        <taxon>Arabidopsis</taxon>
    </lineage>
</organism>
<protein>
    <recommendedName>
        <fullName>Putative Delta(7)-sterol-C5(6)-desaturase 2</fullName>
        <ecNumber>1.14.19.20</ecNumber>
    </recommendedName>
    <alternativeName>
        <fullName>Delta(7)-sterol-C5-desaturase 2</fullName>
    </alternativeName>
    <alternativeName>
        <fullName>Delta-7-C-5 sterol desaturase 2</fullName>
    </alternativeName>
    <alternativeName>
        <fullName>Homolog of DWF7 protein</fullName>
    </alternativeName>
</protein>
<evidence type="ECO:0000250" key="1"/>
<evidence type="ECO:0000250" key="2">
    <source>
        <dbReference type="UniProtKB" id="Q39208"/>
    </source>
</evidence>
<evidence type="ECO:0000255" key="3"/>
<evidence type="ECO:0000305" key="4"/>